<organism>
    <name type="scientific">Shouchella clausii (strain KSM-K16)</name>
    <name type="common">Alkalihalobacillus clausii</name>
    <dbReference type="NCBI Taxonomy" id="66692"/>
    <lineage>
        <taxon>Bacteria</taxon>
        <taxon>Bacillati</taxon>
        <taxon>Bacillota</taxon>
        <taxon>Bacilli</taxon>
        <taxon>Bacillales</taxon>
        <taxon>Bacillaceae</taxon>
        <taxon>Shouchella</taxon>
    </lineage>
</organism>
<accession>Q5WHI2</accession>
<reference key="1">
    <citation type="submission" date="2003-10" db="EMBL/GenBank/DDBJ databases">
        <title>The complete genome sequence of the alkaliphilic Bacillus clausii KSM-K16.</title>
        <authorList>
            <person name="Takaki Y."/>
            <person name="Kageyama Y."/>
            <person name="Shimamura S."/>
            <person name="Suzuki H."/>
            <person name="Nishi S."/>
            <person name="Hatada Y."/>
            <person name="Kawai S."/>
            <person name="Ito S."/>
            <person name="Horikoshi K."/>
        </authorList>
    </citation>
    <scope>NUCLEOTIDE SEQUENCE [LARGE SCALE GENOMIC DNA]</scope>
    <source>
        <strain>KSM-K16</strain>
    </source>
</reference>
<name>AROE_SHOC1</name>
<protein>
    <recommendedName>
        <fullName evidence="1">Shikimate dehydrogenase (NADP(+))</fullName>
        <shortName evidence="1">SDH</shortName>
        <ecNumber evidence="1">1.1.1.25</ecNumber>
    </recommendedName>
</protein>
<comment type="function">
    <text evidence="1">Involved in the biosynthesis of the chorismate, which leads to the biosynthesis of aromatic amino acids. Catalyzes the reversible NADPH linked reduction of 3-dehydroshikimate (DHSA) to yield shikimate (SA).</text>
</comment>
<comment type="catalytic activity">
    <reaction evidence="1">
        <text>shikimate + NADP(+) = 3-dehydroshikimate + NADPH + H(+)</text>
        <dbReference type="Rhea" id="RHEA:17737"/>
        <dbReference type="ChEBI" id="CHEBI:15378"/>
        <dbReference type="ChEBI" id="CHEBI:16630"/>
        <dbReference type="ChEBI" id="CHEBI:36208"/>
        <dbReference type="ChEBI" id="CHEBI:57783"/>
        <dbReference type="ChEBI" id="CHEBI:58349"/>
        <dbReference type="EC" id="1.1.1.25"/>
    </reaction>
</comment>
<comment type="pathway">
    <text evidence="1">Metabolic intermediate biosynthesis; chorismate biosynthesis; chorismate from D-erythrose 4-phosphate and phosphoenolpyruvate: step 4/7.</text>
</comment>
<comment type="subunit">
    <text evidence="1">Homodimer.</text>
</comment>
<comment type="similarity">
    <text evidence="1">Belongs to the shikimate dehydrogenase family.</text>
</comment>
<feature type="chain" id="PRO_1000021264" description="Shikimate dehydrogenase (NADP(+))">
    <location>
        <begin position="1"/>
        <end position="275"/>
    </location>
</feature>
<feature type="active site" description="Proton acceptor" evidence="1">
    <location>
        <position position="66"/>
    </location>
</feature>
<feature type="binding site" evidence="1">
    <location>
        <begin position="15"/>
        <end position="17"/>
    </location>
    <ligand>
        <name>shikimate</name>
        <dbReference type="ChEBI" id="CHEBI:36208"/>
    </ligand>
</feature>
<feature type="binding site" evidence="1">
    <location>
        <position position="62"/>
    </location>
    <ligand>
        <name>shikimate</name>
        <dbReference type="ChEBI" id="CHEBI:36208"/>
    </ligand>
</feature>
<feature type="binding site" evidence="1">
    <location>
        <position position="78"/>
    </location>
    <ligand>
        <name>NADP(+)</name>
        <dbReference type="ChEBI" id="CHEBI:58349"/>
    </ligand>
</feature>
<feature type="binding site" evidence="1">
    <location>
        <position position="87"/>
    </location>
    <ligand>
        <name>shikimate</name>
        <dbReference type="ChEBI" id="CHEBI:36208"/>
    </ligand>
</feature>
<feature type="binding site" evidence="1">
    <location>
        <position position="102"/>
    </location>
    <ligand>
        <name>shikimate</name>
        <dbReference type="ChEBI" id="CHEBI:36208"/>
    </ligand>
</feature>
<feature type="binding site" evidence="1">
    <location>
        <begin position="128"/>
        <end position="132"/>
    </location>
    <ligand>
        <name>NADP(+)</name>
        <dbReference type="ChEBI" id="CHEBI:58349"/>
    </ligand>
</feature>
<feature type="binding site" evidence="1">
    <location>
        <begin position="151"/>
        <end position="156"/>
    </location>
    <ligand>
        <name>NADP(+)</name>
        <dbReference type="ChEBI" id="CHEBI:58349"/>
    </ligand>
</feature>
<feature type="binding site" evidence="1">
    <location>
        <position position="218"/>
    </location>
    <ligand>
        <name>NADP(+)</name>
        <dbReference type="ChEBI" id="CHEBI:58349"/>
    </ligand>
</feature>
<feature type="binding site" evidence="1">
    <location>
        <position position="220"/>
    </location>
    <ligand>
        <name>shikimate</name>
        <dbReference type="ChEBI" id="CHEBI:36208"/>
    </ligand>
</feature>
<feature type="binding site" evidence="1">
    <location>
        <position position="241"/>
    </location>
    <ligand>
        <name>NADP(+)</name>
        <dbReference type="ChEBI" id="CHEBI:58349"/>
    </ligand>
</feature>
<proteinExistence type="inferred from homology"/>
<gene>
    <name evidence="1" type="primary">aroE</name>
    <name type="ordered locus">ABC1638</name>
</gene>
<dbReference type="EC" id="1.1.1.25" evidence="1"/>
<dbReference type="EMBL" id="AP006627">
    <property type="protein sequence ID" value="BAD64173.1"/>
    <property type="molecule type" value="Genomic_DNA"/>
</dbReference>
<dbReference type="RefSeq" id="WP_011246482.1">
    <property type="nucleotide sequence ID" value="NC_006582.1"/>
</dbReference>
<dbReference type="SMR" id="Q5WHI2"/>
<dbReference type="STRING" id="66692.ABC1638"/>
<dbReference type="GeneID" id="86925727"/>
<dbReference type="KEGG" id="bcl:ABC1638"/>
<dbReference type="eggNOG" id="COG0169">
    <property type="taxonomic scope" value="Bacteria"/>
</dbReference>
<dbReference type="HOGENOM" id="CLU_044063_0_1_9"/>
<dbReference type="OrthoDB" id="9792692at2"/>
<dbReference type="UniPathway" id="UPA00053">
    <property type="reaction ID" value="UER00087"/>
</dbReference>
<dbReference type="Proteomes" id="UP000001168">
    <property type="component" value="Chromosome"/>
</dbReference>
<dbReference type="GO" id="GO:0005829">
    <property type="term" value="C:cytosol"/>
    <property type="evidence" value="ECO:0007669"/>
    <property type="project" value="TreeGrafter"/>
</dbReference>
<dbReference type="GO" id="GO:0050661">
    <property type="term" value="F:NADP binding"/>
    <property type="evidence" value="ECO:0007669"/>
    <property type="project" value="InterPro"/>
</dbReference>
<dbReference type="GO" id="GO:0004764">
    <property type="term" value="F:shikimate 3-dehydrogenase (NADP+) activity"/>
    <property type="evidence" value="ECO:0007669"/>
    <property type="project" value="UniProtKB-UniRule"/>
</dbReference>
<dbReference type="GO" id="GO:0008652">
    <property type="term" value="P:amino acid biosynthetic process"/>
    <property type="evidence" value="ECO:0007669"/>
    <property type="project" value="UniProtKB-KW"/>
</dbReference>
<dbReference type="GO" id="GO:0009073">
    <property type="term" value="P:aromatic amino acid family biosynthetic process"/>
    <property type="evidence" value="ECO:0007669"/>
    <property type="project" value="UniProtKB-KW"/>
</dbReference>
<dbReference type="GO" id="GO:0009423">
    <property type="term" value="P:chorismate biosynthetic process"/>
    <property type="evidence" value="ECO:0007669"/>
    <property type="project" value="UniProtKB-UniRule"/>
</dbReference>
<dbReference type="GO" id="GO:0019632">
    <property type="term" value="P:shikimate metabolic process"/>
    <property type="evidence" value="ECO:0007669"/>
    <property type="project" value="InterPro"/>
</dbReference>
<dbReference type="CDD" id="cd01065">
    <property type="entry name" value="NAD_bind_Shikimate_DH"/>
    <property type="match status" value="1"/>
</dbReference>
<dbReference type="Gene3D" id="3.40.50.10860">
    <property type="entry name" value="Leucine Dehydrogenase, chain A, domain 1"/>
    <property type="match status" value="1"/>
</dbReference>
<dbReference type="Gene3D" id="3.40.50.720">
    <property type="entry name" value="NAD(P)-binding Rossmann-like Domain"/>
    <property type="match status" value="1"/>
</dbReference>
<dbReference type="HAMAP" id="MF_00222">
    <property type="entry name" value="Shikimate_DH_AroE"/>
    <property type="match status" value="1"/>
</dbReference>
<dbReference type="InterPro" id="IPR046346">
    <property type="entry name" value="Aminoacid_DH-like_N_sf"/>
</dbReference>
<dbReference type="InterPro" id="IPR036291">
    <property type="entry name" value="NAD(P)-bd_dom_sf"/>
</dbReference>
<dbReference type="InterPro" id="IPR041121">
    <property type="entry name" value="SDH_C"/>
</dbReference>
<dbReference type="InterPro" id="IPR011342">
    <property type="entry name" value="Shikimate_DH"/>
</dbReference>
<dbReference type="InterPro" id="IPR013708">
    <property type="entry name" value="Shikimate_DH-bd_N"/>
</dbReference>
<dbReference type="InterPro" id="IPR022893">
    <property type="entry name" value="Shikimate_DH_fam"/>
</dbReference>
<dbReference type="InterPro" id="IPR006151">
    <property type="entry name" value="Shikm_DH/Glu-tRNA_Rdtase"/>
</dbReference>
<dbReference type="NCBIfam" id="TIGR00507">
    <property type="entry name" value="aroE"/>
    <property type="match status" value="1"/>
</dbReference>
<dbReference type="NCBIfam" id="NF001319">
    <property type="entry name" value="PRK00258.3-3"/>
    <property type="match status" value="1"/>
</dbReference>
<dbReference type="PANTHER" id="PTHR21089:SF1">
    <property type="entry name" value="BIFUNCTIONAL 3-DEHYDROQUINATE DEHYDRATASE_SHIKIMATE DEHYDROGENASE, CHLOROPLASTIC"/>
    <property type="match status" value="1"/>
</dbReference>
<dbReference type="PANTHER" id="PTHR21089">
    <property type="entry name" value="SHIKIMATE DEHYDROGENASE"/>
    <property type="match status" value="1"/>
</dbReference>
<dbReference type="Pfam" id="PF18317">
    <property type="entry name" value="SDH_C"/>
    <property type="match status" value="1"/>
</dbReference>
<dbReference type="Pfam" id="PF01488">
    <property type="entry name" value="Shikimate_DH"/>
    <property type="match status" value="1"/>
</dbReference>
<dbReference type="Pfam" id="PF08501">
    <property type="entry name" value="Shikimate_dh_N"/>
    <property type="match status" value="1"/>
</dbReference>
<dbReference type="SUPFAM" id="SSF53223">
    <property type="entry name" value="Aminoacid dehydrogenase-like, N-terminal domain"/>
    <property type="match status" value="1"/>
</dbReference>
<dbReference type="SUPFAM" id="SSF51735">
    <property type="entry name" value="NAD(P)-binding Rossmann-fold domains"/>
    <property type="match status" value="1"/>
</dbReference>
<keyword id="KW-0028">Amino-acid biosynthesis</keyword>
<keyword id="KW-0057">Aromatic amino acid biosynthesis</keyword>
<keyword id="KW-0521">NADP</keyword>
<keyword id="KW-0560">Oxidoreductase</keyword>
<keyword id="KW-1185">Reference proteome</keyword>
<evidence type="ECO:0000255" key="1">
    <source>
        <dbReference type="HAMAP-Rule" id="MF_00222"/>
    </source>
</evidence>
<sequence length="275" mass="30045">MTRQFGLIGHPLGHSKSPVMHEAAYKDMGLDAVYCAYDISPQELGNAIRTMKAQGIDGFNVTIPHKVAIIDYLDEIDEDAEAMGAVNTVVCQDGRWVGKNTDADGYIESLLPVVSDQSLTGRRVLVIGAGGAARAVIHALGKQRATISVSNRTAEKAQELAQLFSHLTIEAIPLNEAESTLGTYDVLINTTSVGMYPDTSKQPIALDRLKQATIVSDLIYNPYETALLQEAKQRGNRILNGIGMFVNQGALSIEHWTGRKPNRKCMERVVRMHLT</sequence>